<organism>
    <name type="scientific">Corynebacterium urealyticum (strain ATCC 43042 / DSM 7109)</name>
    <dbReference type="NCBI Taxonomy" id="504474"/>
    <lineage>
        <taxon>Bacteria</taxon>
        <taxon>Bacillati</taxon>
        <taxon>Actinomycetota</taxon>
        <taxon>Actinomycetes</taxon>
        <taxon>Mycobacteriales</taxon>
        <taxon>Corynebacteriaceae</taxon>
        <taxon>Corynebacterium</taxon>
    </lineage>
</organism>
<accession>B1VFY7</accession>
<sequence length="482" mass="52285">MTTAIQEQQNSAAPTAAGRVVRVIGPVVDVEFPRGQQPALFNALHVEVDLEAVAKTITLEVAQHLGDNLVRTVSMAPTDGLVRGAEVKDTGKPISVPVGDVVKGHVFNALGDCLDEPGLGRDGEQWGIHREPPAFDELEGKTEILETGVKVIDLLTPYVKGGKIGLFGGAGVGKTVLIQEMITRIAREFSGTSVFAGVGERTREGTDLFLEMEEMGVLQDTALVFGQMDEPPGVRMRVALSGLTMAEYFRDVQGQDVLLFIDNIFRFTQAGSEVSTLLGRMPSAVGYQPTLADEMGVLQERITSTKGKSITSLQAVYVPADDYTDPAPATTFAHLDATTELDRAIASKGIYPAVNPLTSTSRILEPGIVGEKHYEVAQRVINILQKNKELQDIIAILGMDELSEEDKITVQRARRIERFLGQNFFVAEKFTGIPGSFVPLEETIDAFERICDGEFDAYPEQAFNGLGGLDDVEAAYKKLTDK</sequence>
<feature type="chain" id="PRO_1000143490" description="ATP synthase subunit beta">
    <location>
        <begin position="1"/>
        <end position="482"/>
    </location>
</feature>
<feature type="binding site" evidence="1">
    <location>
        <begin position="168"/>
        <end position="175"/>
    </location>
    <ligand>
        <name>ATP</name>
        <dbReference type="ChEBI" id="CHEBI:30616"/>
    </ligand>
</feature>
<dbReference type="EC" id="7.1.2.2" evidence="1"/>
<dbReference type="EMBL" id="AM942444">
    <property type="protein sequence ID" value="CAQ04676.1"/>
    <property type="molecule type" value="Genomic_DNA"/>
</dbReference>
<dbReference type="RefSeq" id="WP_012359967.1">
    <property type="nucleotide sequence ID" value="NC_010545.1"/>
</dbReference>
<dbReference type="SMR" id="B1VFY7"/>
<dbReference type="STRING" id="504474.cu0716"/>
<dbReference type="GeneID" id="60603492"/>
<dbReference type="KEGG" id="cur:cu0716"/>
<dbReference type="eggNOG" id="COG0055">
    <property type="taxonomic scope" value="Bacteria"/>
</dbReference>
<dbReference type="HOGENOM" id="CLU_022398_0_2_11"/>
<dbReference type="Proteomes" id="UP000001727">
    <property type="component" value="Chromosome"/>
</dbReference>
<dbReference type="GO" id="GO:0005886">
    <property type="term" value="C:plasma membrane"/>
    <property type="evidence" value="ECO:0007669"/>
    <property type="project" value="UniProtKB-SubCell"/>
</dbReference>
<dbReference type="GO" id="GO:0045259">
    <property type="term" value="C:proton-transporting ATP synthase complex"/>
    <property type="evidence" value="ECO:0007669"/>
    <property type="project" value="UniProtKB-KW"/>
</dbReference>
<dbReference type="GO" id="GO:0005524">
    <property type="term" value="F:ATP binding"/>
    <property type="evidence" value="ECO:0007669"/>
    <property type="project" value="UniProtKB-UniRule"/>
</dbReference>
<dbReference type="GO" id="GO:0016887">
    <property type="term" value="F:ATP hydrolysis activity"/>
    <property type="evidence" value="ECO:0007669"/>
    <property type="project" value="InterPro"/>
</dbReference>
<dbReference type="GO" id="GO:0046933">
    <property type="term" value="F:proton-transporting ATP synthase activity, rotational mechanism"/>
    <property type="evidence" value="ECO:0007669"/>
    <property type="project" value="UniProtKB-UniRule"/>
</dbReference>
<dbReference type="CDD" id="cd18110">
    <property type="entry name" value="ATP-synt_F1_beta_C"/>
    <property type="match status" value="1"/>
</dbReference>
<dbReference type="CDD" id="cd18115">
    <property type="entry name" value="ATP-synt_F1_beta_N"/>
    <property type="match status" value="1"/>
</dbReference>
<dbReference type="CDD" id="cd01133">
    <property type="entry name" value="F1-ATPase_beta_CD"/>
    <property type="match status" value="1"/>
</dbReference>
<dbReference type="FunFam" id="1.10.1140.10:FF:000005">
    <property type="entry name" value="ATP synthase subunit beta"/>
    <property type="match status" value="1"/>
</dbReference>
<dbReference type="FunFam" id="2.40.10.170:FF:000005">
    <property type="entry name" value="ATP synthase subunit beta"/>
    <property type="match status" value="1"/>
</dbReference>
<dbReference type="FunFam" id="3.40.50.300:FF:000004">
    <property type="entry name" value="ATP synthase subunit beta"/>
    <property type="match status" value="1"/>
</dbReference>
<dbReference type="Gene3D" id="2.40.10.170">
    <property type="match status" value="1"/>
</dbReference>
<dbReference type="Gene3D" id="1.10.1140.10">
    <property type="entry name" value="Bovine Mitochondrial F1-atpase, Atp Synthase Beta Chain, Chain D, domain 3"/>
    <property type="match status" value="1"/>
</dbReference>
<dbReference type="Gene3D" id="3.40.50.300">
    <property type="entry name" value="P-loop containing nucleotide triphosphate hydrolases"/>
    <property type="match status" value="1"/>
</dbReference>
<dbReference type="HAMAP" id="MF_01347">
    <property type="entry name" value="ATP_synth_beta_bact"/>
    <property type="match status" value="1"/>
</dbReference>
<dbReference type="InterPro" id="IPR003593">
    <property type="entry name" value="AAA+_ATPase"/>
</dbReference>
<dbReference type="InterPro" id="IPR055190">
    <property type="entry name" value="ATP-synt_VA_C"/>
</dbReference>
<dbReference type="InterPro" id="IPR005722">
    <property type="entry name" value="ATP_synth_F1_bsu"/>
</dbReference>
<dbReference type="InterPro" id="IPR020003">
    <property type="entry name" value="ATPase_a/bsu_AS"/>
</dbReference>
<dbReference type="InterPro" id="IPR050053">
    <property type="entry name" value="ATPase_alpha/beta_chains"/>
</dbReference>
<dbReference type="InterPro" id="IPR004100">
    <property type="entry name" value="ATPase_F1/V1/A1_a/bsu_N"/>
</dbReference>
<dbReference type="InterPro" id="IPR036121">
    <property type="entry name" value="ATPase_F1/V1/A1_a/bsu_N_sf"/>
</dbReference>
<dbReference type="InterPro" id="IPR000194">
    <property type="entry name" value="ATPase_F1/V1/A1_a/bsu_nucl-bd"/>
</dbReference>
<dbReference type="InterPro" id="IPR024034">
    <property type="entry name" value="ATPase_F1/V1_b/a_C"/>
</dbReference>
<dbReference type="InterPro" id="IPR027417">
    <property type="entry name" value="P-loop_NTPase"/>
</dbReference>
<dbReference type="NCBIfam" id="TIGR01039">
    <property type="entry name" value="atpD"/>
    <property type="match status" value="1"/>
</dbReference>
<dbReference type="PANTHER" id="PTHR15184">
    <property type="entry name" value="ATP SYNTHASE"/>
    <property type="match status" value="1"/>
</dbReference>
<dbReference type="PANTHER" id="PTHR15184:SF71">
    <property type="entry name" value="ATP SYNTHASE SUBUNIT BETA, MITOCHONDRIAL"/>
    <property type="match status" value="1"/>
</dbReference>
<dbReference type="Pfam" id="PF00006">
    <property type="entry name" value="ATP-synt_ab"/>
    <property type="match status" value="1"/>
</dbReference>
<dbReference type="Pfam" id="PF02874">
    <property type="entry name" value="ATP-synt_ab_N"/>
    <property type="match status" value="1"/>
</dbReference>
<dbReference type="Pfam" id="PF22919">
    <property type="entry name" value="ATP-synt_VA_C"/>
    <property type="match status" value="1"/>
</dbReference>
<dbReference type="SMART" id="SM00382">
    <property type="entry name" value="AAA"/>
    <property type="match status" value="1"/>
</dbReference>
<dbReference type="SUPFAM" id="SSF47917">
    <property type="entry name" value="C-terminal domain of alpha and beta subunits of F1 ATP synthase"/>
    <property type="match status" value="1"/>
</dbReference>
<dbReference type="SUPFAM" id="SSF50615">
    <property type="entry name" value="N-terminal domain of alpha and beta subunits of F1 ATP synthase"/>
    <property type="match status" value="1"/>
</dbReference>
<dbReference type="SUPFAM" id="SSF52540">
    <property type="entry name" value="P-loop containing nucleoside triphosphate hydrolases"/>
    <property type="match status" value="1"/>
</dbReference>
<dbReference type="PROSITE" id="PS00152">
    <property type="entry name" value="ATPASE_ALPHA_BETA"/>
    <property type="match status" value="1"/>
</dbReference>
<keyword id="KW-0066">ATP synthesis</keyword>
<keyword id="KW-0067">ATP-binding</keyword>
<keyword id="KW-1003">Cell membrane</keyword>
<keyword id="KW-0139">CF(1)</keyword>
<keyword id="KW-0375">Hydrogen ion transport</keyword>
<keyword id="KW-0406">Ion transport</keyword>
<keyword id="KW-0472">Membrane</keyword>
<keyword id="KW-0547">Nucleotide-binding</keyword>
<keyword id="KW-1185">Reference proteome</keyword>
<keyword id="KW-1278">Translocase</keyword>
<keyword id="KW-0813">Transport</keyword>
<comment type="function">
    <text evidence="1">Produces ATP from ADP in the presence of a proton gradient across the membrane. The catalytic sites are hosted primarily by the beta subunits.</text>
</comment>
<comment type="catalytic activity">
    <reaction evidence="1">
        <text>ATP + H2O + 4 H(+)(in) = ADP + phosphate + 5 H(+)(out)</text>
        <dbReference type="Rhea" id="RHEA:57720"/>
        <dbReference type="ChEBI" id="CHEBI:15377"/>
        <dbReference type="ChEBI" id="CHEBI:15378"/>
        <dbReference type="ChEBI" id="CHEBI:30616"/>
        <dbReference type="ChEBI" id="CHEBI:43474"/>
        <dbReference type="ChEBI" id="CHEBI:456216"/>
        <dbReference type="EC" id="7.1.2.2"/>
    </reaction>
</comment>
<comment type="subunit">
    <text evidence="1">F-type ATPases have 2 components, CF(1) - the catalytic core - and CF(0) - the membrane proton channel. CF(1) has five subunits: alpha(3), beta(3), gamma(1), delta(1), epsilon(1). CF(0) has three main subunits: a(1), b(2) and c(9-12). The alpha and beta chains form an alternating ring which encloses part of the gamma chain. CF(1) is attached to CF(0) by a central stalk formed by the gamma and epsilon chains, while a peripheral stalk is formed by the delta and b chains.</text>
</comment>
<comment type="subcellular location">
    <subcellularLocation>
        <location evidence="1">Cell membrane</location>
        <topology evidence="1">Peripheral membrane protein</topology>
    </subcellularLocation>
</comment>
<comment type="similarity">
    <text evidence="1">Belongs to the ATPase alpha/beta chains family.</text>
</comment>
<protein>
    <recommendedName>
        <fullName evidence="1">ATP synthase subunit beta</fullName>
        <ecNumber evidence="1">7.1.2.2</ecNumber>
    </recommendedName>
    <alternativeName>
        <fullName evidence="1">ATP synthase F1 sector subunit beta</fullName>
    </alternativeName>
    <alternativeName>
        <fullName evidence="1">F-ATPase subunit beta</fullName>
    </alternativeName>
</protein>
<gene>
    <name evidence="1" type="primary">atpD</name>
    <name type="ordered locus">cu0716</name>
</gene>
<name>ATPB_CORU7</name>
<reference key="1">
    <citation type="journal article" date="2008" name="J. Biotechnol.">
        <title>The lifestyle of Corynebacterium urealyticum derived from its complete genome sequence established by pyrosequencing.</title>
        <authorList>
            <person name="Tauch A."/>
            <person name="Trost E."/>
            <person name="Tilker A."/>
            <person name="Ludewig U."/>
            <person name="Schneiker S."/>
            <person name="Goesmann A."/>
            <person name="Arnold W."/>
            <person name="Bekel T."/>
            <person name="Brinkrolf K."/>
            <person name="Brune I."/>
            <person name="Goetker S."/>
            <person name="Kalinowski J."/>
            <person name="Kamp P.-B."/>
            <person name="Lobo F.P."/>
            <person name="Viehoever P."/>
            <person name="Weisshaar B."/>
            <person name="Soriano F."/>
            <person name="Droege M."/>
            <person name="Puehler A."/>
        </authorList>
    </citation>
    <scope>NUCLEOTIDE SEQUENCE [LARGE SCALE GENOMIC DNA]</scope>
    <source>
        <strain>ATCC 43042 / DSM 7109</strain>
    </source>
</reference>
<evidence type="ECO:0000255" key="1">
    <source>
        <dbReference type="HAMAP-Rule" id="MF_01347"/>
    </source>
</evidence>
<proteinExistence type="inferred from homology"/>